<organism>
    <name type="scientific">Homo sapiens</name>
    <name type="common">Human</name>
    <dbReference type="NCBI Taxonomy" id="9606"/>
    <lineage>
        <taxon>Eukaryota</taxon>
        <taxon>Metazoa</taxon>
        <taxon>Chordata</taxon>
        <taxon>Craniata</taxon>
        <taxon>Vertebrata</taxon>
        <taxon>Euteleostomi</taxon>
        <taxon>Mammalia</taxon>
        <taxon>Eutheria</taxon>
        <taxon>Euarchontoglires</taxon>
        <taxon>Primates</taxon>
        <taxon>Haplorrhini</taxon>
        <taxon>Catarrhini</taxon>
        <taxon>Hominidae</taxon>
        <taxon>Homo</taxon>
    </lineage>
</organism>
<protein>
    <recommendedName>
        <fullName evidence="22">Sodium-dependent lysophosphatidylcholine symporter 1</fullName>
        <shortName>NLS1</shortName>
        <shortName>Sodium-dependent LPC symporter 1</shortName>
    </recommendedName>
    <alternativeName>
        <fullName>Major facilitator superfamily domain-containing protein 2A</fullName>
        <shortName evidence="21">HsMFSD2A</shortName>
        <shortName evidence="20">MFSD2a</shortName>
    </alternativeName>
</protein>
<accession>Q8NA29</accession>
<accession>A8K675</accession>
<accession>Q6UWU5</accession>
<accession>Q96F59</accession>
<accession>Q9BRC8</accession>
<gene>
    <name evidence="19 25" type="primary">MFSD2A</name>
    <name type="synonym">MFSD2</name>
    <name type="synonym">NLS1</name>
    <name type="ORF">HMFN0656</name>
    <name type="ORF">PP9177</name>
    <name evidence="13" type="ORF">UNQ300/PRO341</name>
</gene>
<dbReference type="EMBL" id="AY358636">
    <property type="protein sequence ID" value="AAQ88999.1"/>
    <property type="molecule type" value="mRNA"/>
</dbReference>
<dbReference type="EMBL" id="AK093223">
    <property type="protein sequence ID" value="BAC04100.1"/>
    <property type="molecule type" value="mRNA"/>
</dbReference>
<dbReference type="EMBL" id="AB073383">
    <property type="protein sequence ID" value="BAD38634.1"/>
    <property type="molecule type" value="mRNA"/>
</dbReference>
<dbReference type="EMBL" id="AF289609">
    <property type="protein sequence ID" value="AAL55793.1"/>
    <property type="molecule type" value="mRNA"/>
</dbReference>
<dbReference type="EMBL" id="AK075183">
    <property type="protein sequence ID" value="BAC11456.1"/>
    <property type="molecule type" value="mRNA"/>
</dbReference>
<dbReference type="EMBL" id="AK291540">
    <property type="protein sequence ID" value="BAF84229.1"/>
    <property type="molecule type" value="mRNA"/>
</dbReference>
<dbReference type="EMBL" id="AL663070">
    <property type="status" value="NOT_ANNOTATED_CDS"/>
    <property type="molecule type" value="Genomic_DNA"/>
</dbReference>
<dbReference type="EMBL" id="CH471059">
    <property type="protein sequence ID" value="EAX07248.1"/>
    <property type="molecule type" value="Genomic_DNA"/>
</dbReference>
<dbReference type="EMBL" id="BC006353">
    <property type="protein sequence ID" value="AAH06353.2"/>
    <property type="molecule type" value="mRNA"/>
</dbReference>
<dbReference type="EMBL" id="BC011587">
    <property type="protein sequence ID" value="AAH11587.1"/>
    <property type="molecule type" value="mRNA"/>
</dbReference>
<dbReference type="EMBL" id="BC092414">
    <property type="protein sequence ID" value="AAH92414.1"/>
    <property type="molecule type" value="mRNA"/>
</dbReference>
<dbReference type="CCDS" id="CCDS44118.1">
    <molecule id="Q8NA29-1"/>
</dbReference>
<dbReference type="CCDS" id="CCDS446.1">
    <molecule id="Q8NA29-2"/>
</dbReference>
<dbReference type="RefSeq" id="NP_001129965.1">
    <molecule id="Q8NA29-1"/>
    <property type="nucleotide sequence ID" value="NM_001136493.3"/>
</dbReference>
<dbReference type="RefSeq" id="NP_001274737.1">
    <property type="nucleotide sequence ID" value="NM_001287808.1"/>
</dbReference>
<dbReference type="RefSeq" id="NP_001274738.1">
    <property type="nucleotide sequence ID" value="NM_001287809.1"/>
</dbReference>
<dbReference type="RefSeq" id="NP_116182.2">
    <molecule id="Q8NA29-2"/>
    <property type="nucleotide sequence ID" value="NM_032793.4"/>
</dbReference>
<dbReference type="PDB" id="7OIX">
    <property type="method" value="EM"/>
    <property type="resolution" value="3.60 A"/>
    <property type="chains" value="B=1-543"/>
</dbReference>
<dbReference type="PDBsum" id="7OIX"/>
<dbReference type="EMDB" id="EMD-12935"/>
<dbReference type="SMR" id="Q8NA29"/>
<dbReference type="BioGRID" id="124323">
    <property type="interactions" value="3"/>
</dbReference>
<dbReference type="DIP" id="DIP-47306N"/>
<dbReference type="FunCoup" id="Q8NA29">
    <property type="interactions" value="398"/>
</dbReference>
<dbReference type="IntAct" id="Q8NA29">
    <property type="interactions" value="4"/>
</dbReference>
<dbReference type="MINT" id="Q8NA29"/>
<dbReference type="STRING" id="9606.ENSP00000361895"/>
<dbReference type="SwissLipids" id="SLP:000001000"/>
<dbReference type="TCDB" id="2.A.2.3.8">
    <property type="family name" value="the glycoside-pentoside-hexuronide (gph):cation symporter family"/>
</dbReference>
<dbReference type="GlyCosmos" id="Q8NA29">
    <property type="glycosylation" value="2 sites, No reported glycans"/>
</dbReference>
<dbReference type="GlyGen" id="Q8NA29">
    <property type="glycosylation" value="2 sites"/>
</dbReference>
<dbReference type="iPTMnet" id="Q8NA29"/>
<dbReference type="PhosphoSitePlus" id="Q8NA29"/>
<dbReference type="BioMuta" id="MFSD2A"/>
<dbReference type="DMDM" id="74751132"/>
<dbReference type="MassIVE" id="Q8NA29"/>
<dbReference type="PaxDb" id="9606-ENSP00000361895"/>
<dbReference type="PeptideAtlas" id="Q8NA29"/>
<dbReference type="ProteomicsDB" id="72626">
    <molecule id="Q8NA29-1"/>
</dbReference>
<dbReference type="ProteomicsDB" id="72627">
    <molecule id="Q8NA29-2"/>
</dbReference>
<dbReference type="ProteomicsDB" id="72628">
    <molecule id="Q8NA29-3"/>
</dbReference>
<dbReference type="Antibodypedia" id="31983">
    <property type="antibodies" value="102 antibodies from 22 providers"/>
</dbReference>
<dbReference type="DNASU" id="84879"/>
<dbReference type="Ensembl" id="ENST00000372809.5">
    <molecule id="Q8NA29-1"/>
    <property type="protein sequence ID" value="ENSP00000361895.5"/>
    <property type="gene ID" value="ENSG00000168389.18"/>
</dbReference>
<dbReference type="Ensembl" id="ENST00000372811.10">
    <molecule id="Q8NA29-2"/>
    <property type="protein sequence ID" value="ENSP00000361898.6"/>
    <property type="gene ID" value="ENSG00000168389.18"/>
</dbReference>
<dbReference type="GeneID" id="84879"/>
<dbReference type="KEGG" id="hsa:84879"/>
<dbReference type="MANE-Select" id="ENST00000372811.10">
    <molecule id="Q8NA29-2"/>
    <property type="protein sequence ID" value="ENSP00000361898.6"/>
    <property type="RefSeq nucleotide sequence ID" value="NM_032793.5"/>
    <property type="RefSeq protein sequence ID" value="NP_116182.2"/>
</dbReference>
<dbReference type="UCSC" id="uc001ceu.5">
    <molecule id="Q8NA29-1"/>
    <property type="organism name" value="human"/>
</dbReference>
<dbReference type="AGR" id="HGNC:25897"/>
<dbReference type="CTD" id="84879"/>
<dbReference type="DisGeNET" id="84879"/>
<dbReference type="GeneCards" id="MFSD2A"/>
<dbReference type="HGNC" id="HGNC:25897">
    <property type="gene designation" value="MFSD2A"/>
</dbReference>
<dbReference type="HPA" id="ENSG00000168389">
    <property type="expression patterns" value="Tissue enhanced (epididymis, liver, skin)"/>
</dbReference>
<dbReference type="MalaCards" id="MFSD2A"/>
<dbReference type="MIM" id="614397">
    <property type="type" value="gene"/>
</dbReference>
<dbReference type="MIM" id="616486">
    <property type="type" value="phenotype"/>
</dbReference>
<dbReference type="neXtProt" id="NX_Q8NA29"/>
<dbReference type="OpenTargets" id="ENSG00000168389"/>
<dbReference type="Orphanet" id="2512">
    <property type="disease" value="Autosomal recessive primary microcephaly"/>
</dbReference>
<dbReference type="PharmGKB" id="PA165751549"/>
<dbReference type="VEuPathDB" id="HostDB:ENSG00000168389"/>
<dbReference type="eggNOG" id="KOG4830">
    <property type="taxonomic scope" value="Eukaryota"/>
</dbReference>
<dbReference type="GeneTree" id="ENSGT00390000005318"/>
<dbReference type="HOGENOM" id="CLU_027408_6_1_1"/>
<dbReference type="InParanoid" id="Q8NA29"/>
<dbReference type="OMA" id="AFAIGFN"/>
<dbReference type="OrthoDB" id="197206at2759"/>
<dbReference type="PAN-GO" id="Q8NA29">
    <property type="GO annotations" value="3 GO annotations based on evolutionary models"/>
</dbReference>
<dbReference type="PhylomeDB" id="Q8NA29"/>
<dbReference type="TreeFam" id="TF331194"/>
<dbReference type="PathwayCommons" id="Q8NA29"/>
<dbReference type="Reactome" id="R-HSA-1483191">
    <property type="pathway name" value="Synthesis of PC"/>
</dbReference>
<dbReference type="SignaLink" id="Q8NA29"/>
<dbReference type="BioGRID-ORCS" id="84879">
    <property type="hits" value="12 hits in 1142 CRISPR screens"/>
</dbReference>
<dbReference type="ChiTaRS" id="MFSD2A">
    <property type="organism name" value="human"/>
</dbReference>
<dbReference type="GeneWiki" id="MFSD2"/>
<dbReference type="GenomeRNAi" id="84879"/>
<dbReference type="Pharos" id="Q8NA29">
    <property type="development level" value="Tbio"/>
</dbReference>
<dbReference type="PRO" id="PR:Q8NA29"/>
<dbReference type="Proteomes" id="UP000005640">
    <property type="component" value="Chromosome 1"/>
</dbReference>
<dbReference type="RNAct" id="Q8NA29">
    <property type="molecule type" value="protein"/>
</dbReference>
<dbReference type="Bgee" id="ENSG00000168389">
    <property type="expression patterns" value="Expressed in right lobe of liver and 169 other cell types or tissues"/>
</dbReference>
<dbReference type="ExpressionAtlas" id="Q8NA29">
    <property type="expression patterns" value="baseline and differential"/>
</dbReference>
<dbReference type="GO" id="GO:0036464">
    <property type="term" value="C:cytoplasmic ribonucleoprotein granule"/>
    <property type="evidence" value="ECO:0000314"/>
    <property type="project" value="HPA"/>
</dbReference>
<dbReference type="GO" id="GO:0005829">
    <property type="term" value="C:cytosol"/>
    <property type="evidence" value="ECO:0000314"/>
    <property type="project" value="HPA"/>
</dbReference>
<dbReference type="GO" id="GO:0005789">
    <property type="term" value="C:endoplasmic reticulum membrane"/>
    <property type="evidence" value="ECO:0007669"/>
    <property type="project" value="UniProtKB-SubCell"/>
</dbReference>
<dbReference type="GO" id="GO:0016020">
    <property type="term" value="C:membrane"/>
    <property type="evidence" value="ECO:0000304"/>
    <property type="project" value="ARUK-UCL"/>
</dbReference>
<dbReference type="GO" id="GO:0005886">
    <property type="term" value="C:plasma membrane"/>
    <property type="evidence" value="ECO:0000314"/>
    <property type="project" value="ARUK-UCL"/>
</dbReference>
<dbReference type="GO" id="GO:0015245">
    <property type="term" value="F:fatty acid transmembrane transporter activity"/>
    <property type="evidence" value="ECO:0000250"/>
    <property type="project" value="BHF-UCL"/>
</dbReference>
<dbReference type="GO" id="GO:0005324">
    <property type="term" value="F:long-chain fatty acid transmembrane transporter activity"/>
    <property type="evidence" value="ECO:0000315"/>
    <property type="project" value="ARUK-UCL"/>
</dbReference>
<dbReference type="GO" id="GO:0140348">
    <property type="term" value="F:lysophosphatidylcholine flippase activity"/>
    <property type="evidence" value="ECO:0007669"/>
    <property type="project" value="Ensembl"/>
</dbReference>
<dbReference type="GO" id="GO:0051978">
    <property type="term" value="F:lysophospholipid:sodium symporter activity"/>
    <property type="evidence" value="ECO:0000314"/>
    <property type="project" value="UniProtKB"/>
</dbReference>
<dbReference type="GO" id="GO:1901480">
    <property type="term" value="F:oleate transmembrane transporter activity"/>
    <property type="evidence" value="ECO:0000315"/>
    <property type="project" value="ARUK-UCL"/>
</dbReference>
<dbReference type="GO" id="GO:0005548">
    <property type="term" value="F:phospholipid transporter activity"/>
    <property type="evidence" value="ECO:0000304"/>
    <property type="project" value="Reactome"/>
</dbReference>
<dbReference type="GO" id="GO:0007420">
    <property type="term" value="P:brain development"/>
    <property type="evidence" value="ECO:0000315"/>
    <property type="project" value="ARUK-UCL"/>
</dbReference>
<dbReference type="GO" id="GO:0008643">
    <property type="term" value="P:carbohydrate transport"/>
    <property type="evidence" value="ECO:0007669"/>
    <property type="project" value="InterPro"/>
</dbReference>
<dbReference type="GO" id="GO:0009267">
    <property type="term" value="P:cellular response to starvation"/>
    <property type="evidence" value="ECO:0000250"/>
    <property type="project" value="ARUK-UCL"/>
</dbReference>
<dbReference type="GO" id="GO:0050890">
    <property type="term" value="P:cognition"/>
    <property type="evidence" value="ECO:0000315"/>
    <property type="project" value="ARUK-UCL"/>
</dbReference>
<dbReference type="GO" id="GO:0097009">
    <property type="term" value="P:energy homeostasis"/>
    <property type="evidence" value="ECO:0000250"/>
    <property type="project" value="ARUK-UCL"/>
</dbReference>
<dbReference type="GO" id="GO:0060856">
    <property type="term" value="P:establishment of blood-brain barrier"/>
    <property type="evidence" value="ECO:0000250"/>
    <property type="project" value="UniProtKB"/>
</dbReference>
<dbReference type="GO" id="GO:0015908">
    <property type="term" value="P:fatty acid transport"/>
    <property type="evidence" value="ECO:0000315"/>
    <property type="project" value="ARUK-UCL"/>
</dbReference>
<dbReference type="GO" id="GO:0021766">
    <property type="term" value="P:hippocampus development"/>
    <property type="evidence" value="ECO:0000250"/>
    <property type="project" value="BHF-UCL"/>
</dbReference>
<dbReference type="GO" id="GO:1990379">
    <property type="term" value="P:lipid transport across blood-brain barrier"/>
    <property type="evidence" value="ECO:0000315"/>
    <property type="project" value="ARUK-UCL"/>
</dbReference>
<dbReference type="GO" id="GO:0015909">
    <property type="term" value="P:long-chain fatty acid transport"/>
    <property type="evidence" value="ECO:0000250"/>
    <property type="project" value="ARUK-UCL"/>
</dbReference>
<dbReference type="GO" id="GO:0140329">
    <property type="term" value="P:lysophospholipid translocation"/>
    <property type="evidence" value="ECO:0000315"/>
    <property type="project" value="ARUK-UCL"/>
</dbReference>
<dbReference type="GO" id="GO:0051977">
    <property type="term" value="P:lysophospholipid transport"/>
    <property type="evidence" value="ECO:0000314"/>
    <property type="project" value="BHF-UCL"/>
</dbReference>
<dbReference type="GO" id="GO:0035633">
    <property type="term" value="P:maintenance of blood-brain barrier"/>
    <property type="evidence" value="ECO:0000250"/>
    <property type="project" value="ARUK-UCL"/>
</dbReference>
<dbReference type="GO" id="GO:0061744">
    <property type="term" value="P:motor behavior"/>
    <property type="evidence" value="ECO:0000250"/>
    <property type="project" value="ARUK-UCL"/>
</dbReference>
<dbReference type="GO" id="GO:0031999">
    <property type="term" value="P:negative regulation of fatty acid beta-oxidation"/>
    <property type="evidence" value="ECO:0000250"/>
    <property type="project" value="ARUK-UCL"/>
</dbReference>
<dbReference type="GO" id="GO:0006656">
    <property type="term" value="P:phosphatidylcholine biosynthetic process"/>
    <property type="evidence" value="ECO:0000304"/>
    <property type="project" value="Reactome"/>
</dbReference>
<dbReference type="GO" id="GO:0008594">
    <property type="term" value="P:photoreceptor cell morphogenesis"/>
    <property type="evidence" value="ECO:0000250"/>
    <property type="project" value="ARUK-UCL"/>
</dbReference>
<dbReference type="GO" id="GO:0035845">
    <property type="term" value="P:photoreceptor cell outer segment organization"/>
    <property type="evidence" value="ECO:0000250"/>
    <property type="project" value="ARUK-UCL"/>
</dbReference>
<dbReference type="GO" id="GO:0030307">
    <property type="term" value="P:positive regulation of cell growth"/>
    <property type="evidence" value="ECO:0000250"/>
    <property type="project" value="ARUK-UCL"/>
</dbReference>
<dbReference type="GO" id="GO:0010867">
    <property type="term" value="P:positive regulation of triglyceride biosynthetic process"/>
    <property type="evidence" value="ECO:0000250"/>
    <property type="project" value="ARUK-UCL"/>
</dbReference>
<dbReference type="GO" id="GO:0050773">
    <property type="term" value="P:regulation of dendrite development"/>
    <property type="evidence" value="ECO:0000250"/>
    <property type="project" value="ARUK-UCL"/>
</dbReference>
<dbReference type="GO" id="GO:0040014">
    <property type="term" value="P:regulation of multicellular organism growth"/>
    <property type="evidence" value="ECO:0000250"/>
    <property type="project" value="ARUK-UCL"/>
</dbReference>
<dbReference type="GO" id="GO:0150011">
    <property type="term" value="P:regulation of neuron projection arborization"/>
    <property type="evidence" value="ECO:0000250"/>
    <property type="project" value="ARUK-UCL"/>
</dbReference>
<dbReference type="GO" id="GO:0150172">
    <property type="term" value="P:regulation of phosphatidylcholine metabolic process"/>
    <property type="evidence" value="ECO:0000315"/>
    <property type="project" value="ARUK-UCL"/>
</dbReference>
<dbReference type="GO" id="GO:0150175">
    <property type="term" value="P:regulation of phosphatidylethanolamine metabolic process"/>
    <property type="evidence" value="ECO:0000250"/>
    <property type="project" value="ARUK-UCL"/>
</dbReference>
<dbReference type="GO" id="GO:0150178">
    <property type="term" value="P:regulation of phosphatidylserine metabolic process"/>
    <property type="evidence" value="ECO:0000250"/>
    <property type="project" value="ARUK-UCL"/>
</dbReference>
<dbReference type="GO" id="GO:0060042">
    <property type="term" value="P:retina morphogenesis in camera-type eye"/>
    <property type="evidence" value="ECO:0000250"/>
    <property type="project" value="ARUK-UCL"/>
</dbReference>
<dbReference type="GO" id="GO:0003406">
    <property type="term" value="P:retinal pigment epithelium development"/>
    <property type="evidence" value="ECO:0000250"/>
    <property type="project" value="ARUK-UCL"/>
</dbReference>
<dbReference type="GO" id="GO:0045056">
    <property type="term" value="P:transcytosis"/>
    <property type="evidence" value="ECO:0000250"/>
    <property type="project" value="UniProtKB"/>
</dbReference>
<dbReference type="GO" id="GO:0055085">
    <property type="term" value="P:transmembrane transport"/>
    <property type="evidence" value="ECO:0000318"/>
    <property type="project" value="GO_Central"/>
</dbReference>
<dbReference type="GO" id="GO:0150104">
    <property type="term" value="P:transport across blood-brain barrier"/>
    <property type="evidence" value="ECO:0000303"/>
    <property type="project" value="ARUK-UCL"/>
</dbReference>
<dbReference type="GO" id="GO:0034379">
    <property type="term" value="P:very-low-density lipoprotein particle assembly"/>
    <property type="evidence" value="ECO:0000250"/>
    <property type="project" value="ARUK-UCL"/>
</dbReference>
<dbReference type="CDD" id="cd17451">
    <property type="entry name" value="MFS_NLS1_MFSD2A"/>
    <property type="match status" value="1"/>
</dbReference>
<dbReference type="FunFam" id="1.20.1250.20:FF:000185">
    <property type="entry name" value="sodium-dependent lysophosphatidylcholine symporter 1 isoform X1"/>
    <property type="match status" value="1"/>
</dbReference>
<dbReference type="FunFam" id="1.20.1250.20:FF:000351">
    <property type="entry name" value="sodium-dependent lysophosphatidylcholine symporter 1 isoform X4"/>
    <property type="match status" value="1"/>
</dbReference>
<dbReference type="Gene3D" id="1.20.1250.20">
    <property type="entry name" value="MFS general substrate transporter like domains"/>
    <property type="match status" value="2"/>
</dbReference>
<dbReference type="InterPro" id="IPR039672">
    <property type="entry name" value="MFS_2"/>
</dbReference>
<dbReference type="InterPro" id="IPR036259">
    <property type="entry name" value="MFS_trans_sf"/>
</dbReference>
<dbReference type="PANTHER" id="PTHR11328">
    <property type="entry name" value="MAJOR FACILITATOR SUPERFAMILY DOMAIN-CONTAINING PROTEIN"/>
    <property type="match status" value="1"/>
</dbReference>
<dbReference type="PANTHER" id="PTHR11328:SF29">
    <property type="entry name" value="SODIUM-DEPENDENT LYSOPHOSPHATIDYLCHOLINE SYMPORTER 1"/>
    <property type="match status" value="1"/>
</dbReference>
<dbReference type="Pfam" id="PF13347">
    <property type="entry name" value="MFS_2"/>
    <property type="match status" value="1"/>
</dbReference>
<dbReference type="SUPFAM" id="SSF103473">
    <property type="entry name" value="MFS general substrate transporter"/>
    <property type="match status" value="1"/>
</dbReference>
<feature type="chain" id="PRO_0000273387" description="Sodium-dependent lysophosphatidylcholine symporter 1">
    <location>
        <begin position="1"/>
        <end position="543"/>
    </location>
</feature>
<feature type="topological domain" description="Cytoplasmic" evidence="1">
    <location>
        <begin position="1"/>
        <end position="40"/>
    </location>
</feature>
<feature type="transmembrane region" description="Helical" evidence="1">
    <location>
        <begin position="41"/>
        <end position="70"/>
    </location>
</feature>
<feature type="topological domain" description="Extracellular" evidence="1">
    <location>
        <begin position="71"/>
        <end position="94"/>
    </location>
</feature>
<feature type="transmembrane region" description="Helical" evidence="1">
    <location>
        <begin position="95"/>
        <end position="115"/>
    </location>
</feature>
<feature type="topological domain" description="Cytoplasmic" evidence="1">
    <location>
        <begin position="116"/>
        <end position="127"/>
    </location>
</feature>
<feature type="transmembrane region" description="Helical" evidence="1">
    <location>
        <begin position="128"/>
        <end position="147"/>
    </location>
</feature>
<feature type="topological domain" description="Extracellular" evidence="1">
    <location>
        <begin position="148"/>
        <end position="157"/>
    </location>
</feature>
<feature type="transmembrane region" description="Helical" evidence="1">
    <location>
        <begin position="158"/>
        <end position="182"/>
    </location>
</feature>
<feature type="topological domain" description="Cytoplasmic" evidence="1">
    <location>
        <begin position="183"/>
        <end position="189"/>
    </location>
</feature>
<feature type="transmembrane region" description="Helical" evidence="1">
    <location>
        <begin position="190"/>
        <end position="221"/>
    </location>
</feature>
<feature type="topological domain" description="Extracellular" evidence="1">
    <location>
        <begin position="222"/>
        <end position="241"/>
    </location>
</feature>
<feature type="transmembrane region" description="Helical" evidence="1">
    <location>
        <begin position="242"/>
        <end position="275"/>
    </location>
</feature>
<feature type="topological domain" description="Cytoplasmic" evidence="1">
    <location>
        <begin position="276"/>
        <end position="306"/>
    </location>
</feature>
<feature type="transmembrane region" description="Helical" evidence="1">
    <location>
        <begin position="307"/>
        <end position="333"/>
    </location>
</feature>
<feature type="topological domain" description="Extracellular" evidence="1">
    <location>
        <begin position="334"/>
        <end position="344"/>
    </location>
</feature>
<feature type="transmembrane region" description="Helical" evidence="1">
    <location>
        <begin position="345"/>
        <end position="363"/>
    </location>
</feature>
<feature type="topological domain" description="Cytoplasmic" evidence="1">
    <location>
        <begin position="364"/>
        <end position="367"/>
    </location>
</feature>
<feature type="transmembrane region" description="Helical" evidence="1">
    <location>
        <begin position="368"/>
        <end position="389"/>
    </location>
</feature>
<feature type="topological domain" description="Extracellular" evidence="1">
    <location>
        <begin position="390"/>
        <end position="392"/>
    </location>
</feature>
<feature type="transmembrane region" description="Helical" evidence="1">
    <location>
        <begin position="393"/>
        <end position="429"/>
    </location>
</feature>
<feature type="topological domain" description="Cytoplasmic" evidence="1">
    <location>
        <begin position="430"/>
        <end position="439"/>
    </location>
</feature>
<feature type="transmembrane region" description="Helical" evidence="1">
    <location>
        <begin position="440"/>
        <end position="466"/>
    </location>
</feature>
<feature type="topological domain" description="Extracellular" evidence="1">
    <location>
        <begin position="467"/>
        <end position="478"/>
    </location>
</feature>
<feature type="transmembrane region" description="Helical" evidence="1">
    <location>
        <begin position="479"/>
        <end position="502"/>
    </location>
</feature>
<feature type="topological domain" description="Cytoplasmic" evidence="1">
    <location>
        <begin position="503"/>
        <end position="543"/>
    </location>
</feature>
<feature type="region of interest" description="Disordered" evidence="3">
    <location>
        <begin position="1"/>
        <end position="34"/>
    </location>
</feature>
<feature type="compositionally biased region" description="Low complexity" evidence="3">
    <location>
        <begin position="1"/>
        <end position="14"/>
    </location>
</feature>
<feature type="glycosylation site" description="N-linked (GlcNAc...) asparagine" evidence="23">
    <location>
        <position position="230"/>
    </location>
</feature>
<feature type="glycosylation site" description="N-linked (GlcNAc...) asparagine" evidence="23">
    <location>
        <position position="240"/>
    </location>
</feature>
<feature type="disulfide bond" evidence="24">
    <location>
        <begin position="225"/>
        <end position="473"/>
    </location>
</feature>
<feature type="splice variant" id="VSP_022540" description="In isoform 3." evidence="13">
    <original>MAKGEGAESGSAAGLLPTSILQSTERPAQVKKEPKKKKQQLSVCNKLCYALGGAPYQVTGCALGFFLQIYLLDVAQKDEEVVFCFSSFQVGPFSASIILFVGRAWDAITDPLVGLCISKSPWTCLGRLMPWIIFSTPLAVIAYFLIWFVPDFPHGQTYWYLLFYCLFETMVTCFHVPYSALTMFIS</original>
    <variation>MWLRWALSLPPSSCLWAEPGMPSQTPWWASASANPPGPAWVALCPGSSSPRPWPSLPTSSSGSCPTSHTARPIGTCFSIASLKQWSRVSMFPTRLSPCSSA</variation>
    <location>
        <begin position="1"/>
        <end position="186"/>
    </location>
</feature>
<feature type="splice variant" id="VSP_022539" description="In isoform 2." evidence="14 15 16 17 18">
    <location>
        <begin position="77"/>
        <end position="89"/>
    </location>
</feature>
<feature type="sequence variant" id="VAR_085538" description="In NEDMISBA; uncertain significance; dbSNP:rs1570238098." evidence="11">
    <location>
        <position position="81"/>
    </location>
</feature>
<feature type="sequence variant" id="VAR_074624" description="In NEDMISBA; no effect on cell membrane localization; loss of LPC transport activity; dbSNP:rs1057517688." evidence="9 10">
    <original>T</original>
    <variation>M</variation>
    <location>
        <position position="172"/>
    </location>
</feature>
<feature type="sequence variant" id="VAR_074625" description="In NEDMISBA; no effect on cell membrane localization; decreased LPC transport activity; dbSNP:rs1057517689." evidence="9">
    <original>S</original>
    <variation>L</variation>
    <location>
        <position position="179"/>
    </location>
</feature>
<feature type="sequence variant" id="VAR_085539" description="In NEDMISBA; reduced expression; no effect on cell membrane localization; decreased LPC transport activity; dbSNP:rs756467073." evidence="10">
    <original>T</original>
    <variation>M</variation>
    <location>
        <position position="211"/>
    </location>
</feature>
<feature type="sequence variant" id="VAR_085540" description="In NEDMISBA; reduced expression; no effect on cell membrane localization; decreased LPC transport activity." evidence="10">
    <original>V</original>
    <variation>F</variation>
    <location>
        <position position="263"/>
    </location>
</feature>
<feature type="sequence variant" id="VAR_085541" description="In NEDMISBA; reduced expression; no effect on cell membrane localization; no effect on LPC transport activity; dbSNP:rs776741331." evidence="10">
    <original>R</original>
    <variation>H</variation>
    <location>
        <position position="339"/>
    </location>
</feature>
<feature type="sequence variant" id="VAR_074626" description="In NEDMISBA; no effect on cell membrane localization; decreased LPC transport activity; dbSNP:rs1057519087." evidence="8">
    <original>S</original>
    <variation>L</variation>
    <location>
        <position position="352"/>
    </location>
</feature>
<feature type="sequence variant" id="VAR_085542" description="In NEDMISBA; reduced expression; no effect on cell membrane localization; loss of LPC transport activity." evidence="10">
    <original>P</original>
    <variation>L</variation>
    <location>
        <position position="506"/>
    </location>
</feature>
<feature type="mutagenesis site" description="Does not affect lysophosphatidylcholine (LPC) transport." evidence="12">
    <original>Q</original>
    <variation>E</variation>
    <location>
        <position position="57"/>
    </location>
</feature>
<feature type="mutagenesis site" description="Abolished lysophosphatidylcholine (LPC) transport." evidence="12">
    <original>Q</original>
    <variation>L</variation>
    <location>
        <position position="57"/>
    </location>
</feature>
<feature type="mutagenesis site" description="Abolished lysophosphatidylcholine (LPC) transport." evidence="12">
    <original>F</original>
    <variation>A</variation>
    <location>
        <position position="65"/>
    </location>
</feature>
<feature type="mutagenesis site" description="Abolished lysophosphatidylcholine (LPC) transport." evidence="12">
    <original>F</original>
    <variation>A</variation>
    <location>
        <position position="66"/>
    </location>
</feature>
<feature type="mutagenesis site" description="Abolished lysophosphatidylcholine (LPC) transport." evidence="12">
    <original>D</original>
    <variation>A</variation>
    <location>
        <position position="73"/>
    </location>
</feature>
<feature type="mutagenesis site" description="Reduced lysophosphatidylcholine (LPC) transport." evidence="12">
    <original>R</original>
    <variation>A</variation>
    <variation>K</variation>
    <variation>E</variation>
    <location>
        <position position="103"/>
    </location>
</feature>
<feature type="mutagenesis site" description="No effect on cell sensitivity toward tunicamycin." evidence="5">
    <original>R</original>
    <variation>A</variation>
    <location>
        <position position="103"/>
    </location>
</feature>
<feature type="mutagenesis site" description="No effect on cell sensitivity toward tunicamycin." evidence="5">
    <original>D</original>
    <variation>A</variation>
    <location>
        <position position="106"/>
    </location>
</feature>
<feature type="mutagenesis site" description="Drastic loss of cell sensitivity toward tunicamycin. Abolished lysophosphatidylcholine (LPC) transport." evidence="5 12">
    <original>D</original>
    <variation>A</variation>
    <location>
        <position position="110"/>
    </location>
</feature>
<feature type="mutagenesis site" description="Reduced expression; no effect on cell membrane localization; decreased LPC transport activity." evidence="10">
    <original>P</original>
    <variation>T</variation>
    <location>
        <position position="177"/>
    </location>
</feature>
<feature type="mutagenesis site" description="Reduced lysophosphatidylcholine (LPC) transport." evidence="12">
    <original>M</original>
    <variation>F</variation>
    <location>
        <position position="200"/>
    </location>
</feature>
<feature type="mutagenesis site" description="Reduced lysophosphatidylcholine (LPC) transport." evidence="12">
    <original>C</original>
    <variation>A</variation>
    <location>
        <position position="225"/>
    </location>
</feature>
<feature type="mutagenesis site" description="Loss of glycosylation; when associated with Q-240." evidence="5">
    <original>N</original>
    <variation>Q</variation>
    <location>
        <position position="230"/>
    </location>
</feature>
<feature type="mutagenesis site" description="Loss of glycosylation; when associated with Q-230." evidence="5">
    <original>N</original>
    <variation>Q</variation>
    <location>
        <position position="240"/>
    </location>
</feature>
<feature type="mutagenesis site" description="Abolished lysophosphatidylcholine (LPC) transport." evidence="12">
    <original>E</original>
    <variation>A</variation>
    <variation>D</variation>
    <variation>Q</variation>
    <variation>R</variation>
    <location>
        <position position="325"/>
    </location>
</feature>
<feature type="mutagenesis site" description="Reduced lysophosphatidylcholine (LPC) transport." evidence="12">
    <original>F</original>
    <variation>A</variation>
    <variation>Y</variation>
    <location>
        <position position="328"/>
    </location>
</feature>
<feature type="mutagenesis site" description="Does not affect lysophosphatidylcholine (LPC) transport." evidence="12">
    <original>Y</original>
    <variation>A</variation>
    <location>
        <position position="334"/>
    </location>
</feature>
<feature type="mutagenesis site" description="Reduced lysophosphatidylcholine (LPC) transport." evidence="12">
    <original>R</original>
    <variation>A</variation>
    <location>
        <position position="339"/>
    </location>
</feature>
<feature type="mutagenesis site" description="Abolished lysophosphatidylcholine (LPC) transport." evidence="12">
    <original>F</original>
    <variation>A</variation>
    <location>
        <position position="342"/>
    </location>
</feature>
<feature type="mutagenesis site" description="Abolished lysophosphatidylcholine (LPC) transport." evidence="12">
    <original>L</original>
    <variation>A</variation>
    <location>
        <position position="346"/>
    </location>
</feature>
<feature type="mutagenesis site" description="Reduced lysophosphatidylcholine (LPC) transport." evidence="12">
    <original>I</original>
    <variation>A</variation>
    <location>
        <position position="349"/>
    </location>
</feature>
<feature type="mutagenesis site" description="Reduced lysophosphatidylcholine (LPC) transport." evidence="12">
    <original>M</original>
    <variation>A</variation>
    <location>
        <position position="350"/>
    </location>
</feature>
<feature type="mutagenesis site" description="Does not affect lysophosphatidylcholine (LPC) transport." evidence="12">
    <original>I</original>
    <variation>A</variation>
    <location>
        <position position="357"/>
    </location>
</feature>
<feature type="mutagenesis site" description="Abolished lysophosphatidylcholine (LPC) transport." evidence="12">
    <original>I</original>
    <variation>W</variation>
    <location>
        <position position="357"/>
    </location>
</feature>
<feature type="mutagenesis site" description="Reduced lysophosphatidylcholine (LPC) transport." evidence="12">
    <original>Q</original>
    <variation>W</variation>
    <location>
        <position position="361"/>
    </location>
</feature>
<feature type="mutagenesis site" description="Abolished lysophosphatidylcholine (LPC) transport." evidence="12">
    <original>A</original>
    <variation>W</variation>
    <location>
        <position position="404"/>
    </location>
</feature>
<feature type="mutagenesis site" description="Reduced lysophosphatidylcholine (LPC) transport." evidence="12">
    <original>F</original>
    <variation>I</variation>
    <variation>W</variation>
    <location>
        <position position="412"/>
    </location>
</feature>
<feature type="mutagenesis site" description="Reduced lysophosphatidylcholine (LPC) transport." evidence="12">
    <original>W</original>
    <variation>A</variation>
    <variation>F</variation>
    <location>
        <position position="416"/>
    </location>
</feature>
<feature type="mutagenesis site" description="Reduced lysophosphatidylcholine (LPC) transport." evidence="12">
    <original>K</original>
    <variation>A</variation>
    <variation>R</variation>
    <variation>Q</variation>
    <location>
        <position position="449"/>
    </location>
</feature>
<feature type="mutagenesis site" description="Loss of plasma membrane localization. Loss of cell sensitivity toward tunicamycin." evidence="5">
    <original>K</original>
    <variation>A</variation>
    <location>
        <position position="449"/>
    </location>
</feature>
<feature type="mutagenesis site" description="Abolished lysophosphatidylcholine (LPC) transport." evidence="12">
    <original>Y</original>
    <variation>A</variation>
    <location>
        <position position="468"/>
    </location>
</feature>
<feature type="mutagenesis site" description="Reduced lysophosphatidylcholine (LPC) transport." evidence="12">
    <original>C</original>
    <variation>A</variation>
    <location>
        <position position="473"/>
    </location>
</feature>
<feature type="sequence conflict" description="In Ref. 1; AAQ88999." evidence="22" ref="1">
    <original>L</original>
    <variation>F</variation>
    <location>
        <position position="229"/>
    </location>
</feature>
<evidence type="ECO:0000250" key="1">
    <source>
        <dbReference type="UniProtKB" id="Q9DA75"/>
    </source>
</evidence>
<evidence type="ECO:0000255" key="2"/>
<evidence type="ECO:0000256" key="3">
    <source>
        <dbReference type="SAM" id="MobiDB-lite"/>
    </source>
</evidence>
<evidence type="ECO:0000269" key="4">
    <source>
    </source>
</evidence>
<evidence type="ECO:0000269" key="5">
    <source>
    </source>
</evidence>
<evidence type="ECO:0000269" key="6">
    <source>
    </source>
</evidence>
<evidence type="ECO:0000269" key="7">
    <source>
    </source>
</evidence>
<evidence type="ECO:0000269" key="8">
    <source>
    </source>
</evidence>
<evidence type="ECO:0000269" key="9">
    <source>
    </source>
</evidence>
<evidence type="ECO:0000269" key="10">
    <source>
    </source>
</evidence>
<evidence type="ECO:0000269" key="11">
    <source>
    </source>
</evidence>
<evidence type="ECO:0000269" key="12">
    <source>
    </source>
</evidence>
<evidence type="ECO:0000303" key="13">
    <source>
    </source>
</evidence>
<evidence type="ECO:0000303" key="14">
    <source>
    </source>
</evidence>
<evidence type="ECO:0000303" key="15">
    <source>
    </source>
</evidence>
<evidence type="ECO:0000303" key="16">
    <source>
    </source>
</evidence>
<evidence type="ECO:0000303" key="17">
    <source>
    </source>
</evidence>
<evidence type="ECO:0000303" key="18">
    <source>
    </source>
</evidence>
<evidence type="ECO:0000303" key="19">
    <source>
    </source>
</evidence>
<evidence type="ECO:0000303" key="20">
    <source>
    </source>
</evidence>
<evidence type="ECO:0000303" key="21">
    <source>
    </source>
</evidence>
<evidence type="ECO:0000305" key="22"/>
<evidence type="ECO:0000305" key="23">
    <source>
    </source>
</evidence>
<evidence type="ECO:0000305" key="24">
    <source>
    </source>
</evidence>
<evidence type="ECO:0000312" key="25">
    <source>
        <dbReference type="HGNC" id="HGNC:25897"/>
    </source>
</evidence>
<sequence>MAKGEGAESGSAAGLLPTSILQSTERPAQVKKEPKKKKQQLSVCNKLCYALGGAPYQVTGCALGFFLQIYLLDVAQKDEEVVFCFSSFQVGPFSASIILFVGRAWDAITDPLVGLCISKSPWTCLGRLMPWIIFSTPLAVIAYFLIWFVPDFPHGQTYWYLLFYCLFETMVTCFHVPYSALTMFISTEQTERDSATAYRMTVEVLGTVLGTAIQGQIVGQADTPCFQDLNSSTVASQSANHTHGTTSHRETQKAYLLAAGVIVCIYIICAVILILGVREQREPYEAQQSEPIAYFRGLRLVMSHGPYIKLITGFLFTSLAFMLVEGNFVLFCTYTLGFRNEFQNLLLAIMLSATLTIPIWQWFLTRFGKKTAVYVGISSAVPFLILVALMESNLIITYAVAVAAGISVAAAFLLPWSMLPDVIDDFHLKQPHFHGTEPIFFSFYVFFTKFASGVSLGISTLSLDFAGYQTRGCSQPERVKFTLNMLVTMAPIVLILLGLLLFKMYPIDEERRRQNKKALQALRDEASSSGCSETDSTELASIL</sequence>
<keyword id="KW-0002">3D-structure</keyword>
<keyword id="KW-0025">Alternative splicing</keyword>
<keyword id="KW-1003">Cell membrane</keyword>
<keyword id="KW-0225">Disease variant</keyword>
<keyword id="KW-1015">Disulfide bond</keyword>
<keyword id="KW-0256">Endoplasmic reticulum</keyword>
<keyword id="KW-0325">Glycoprotein</keyword>
<keyword id="KW-0445">Lipid transport</keyword>
<keyword id="KW-0472">Membrane</keyword>
<keyword id="KW-0905">Primary microcephaly</keyword>
<keyword id="KW-1267">Proteomics identification</keyword>
<keyword id="KW-1185">Reference proteome</keyword>
<keyword id="KW-0769">Symport</keyword>
<keyword id="KW-0812">Transmembrane</keyword>
<keyword id="KW-1133">Transmembrane helix</keyword>
<keyword id="KW-0813">Transport</keyword>
<comment type="function">
    <text evidence="1 4 5 6 7 9 12">Sodium-dependent lysophosphatidylcholine (LPC) symporter, which plays an essential role for blood-brain barrier formation and function (PubMed:24828040, PubMed:32572202, PubMed:34135507). Specifically expressed in endothelium of the blood-brain barrier of micro-vessels and transports LPC into the brain (By similarity). Transport of LPC is essential because it constitutes the major mechanism by which docosahexaenoic acid (DHA), an omega-3 fatty acid that is essential for normal brain growth and cognitive function, enters the brain (PubMed:26005868, PubMed:34135507). Transports LPC carrying long-chain fatty acids such LPC oleate and LPC palmitate with a minimum acyl chain length of 14 carbons (By similarity). Does not transport docosahexaenoic acid in unesterified fatty acid (By similarity). Specifically required for blood-brain barrier formation and function, probably by mediating lipid transport (By similarity). Not required for central nervous system vascular morphogenesis (By similarity). Acts as a transporter for tunicamycin, an inhibitor of asparagine-linked glycosylation (PubMed:21677192). In placenta, acts as a receptor for ERVFRD-1/syncytin-2 and is required for trophoblast fusion (PubMed:18988732, PubMed:23177091).</text>
</comment>
<comment type="catalytic activity">
    <reaction evidence="7">
        <text>a 1-acyl-sn-glycero-3-phosphocholine(in) + Na(+)(in) = a 1-acyl-sn-glycero-3-phosphocholine(out) + Na(+)(out)</text>
        <dbReference type="Rhea" id="RHEA:44376"/>
        <dbReference type="ChEBI" id="CHEBI:29101"/>
        <dbReference type="ChEBI" id="CHEBI:58168"/>
    </reaction>
</comment>
<comment type="catalytic activity">
    <reaction evidence="7">
        <text>1-(4Z,7Z,10Z,13Z,16Z,19Z-docosahexaenoyl)-sn-glycero-3-phosphocholine(in) + Na(+)(in) = 1-(4Z,7Z,10Z,13Z,16Z,19Z-docosahexaenoyl)-sn-glycero-3-phosphocholine(out) + Na(+)(out)</text>
        <dbReference type="Rhea" id="RHEA:43860"/>
        <dbReference type="ChEBI" id="CHEBI:29101"/>
        <dbReference type="ChEBI" id="CHEBI:73873"/>
    </reaction>
</comment>
<comment type="catalytic activity">
    <reaction evidence="7">
        <text>1-(9Z-octadecenoyl)-sn-glycero-3-phosphocholine(in) + Na(+)(in) = 1-(9Z-octadecenoyl)-sn-glycero-3-phosphocholine(out) + Na(+)(out)</text>
        <dbReference type="Rhea" id="RHEA:43856"/>
        <dbReference type="ChEBI" id="CHEBI:28610"/>
        <dbReference type="ChEBI" id="CHEBI:29101"/>
    </reaction>
</comment>
<comment type="catalytic activity">
    <reaction evidence="1">
        <text>1-hexadecanoyl-sn-glycero-3-phosphocholine(in) + Na(+)(in) = 1-hexadecanoyl-sn-glycero-3-phosphocholine(out) + Na(+)(out)</text>
        <dbReference type="Rhea" id="RHEA:43864"/>
        <dbReference type="ChEBI" id="CHEBI:29101"/>
        <dbReference type="ChEBI" id="CHEBI:72998"/>
    </reaction>
</comment>
<comment type="catalytic activity">
    <reaction evidence="1">
        <text>a 1-acyl-sn-glycero-3-phosphoethanolamine(in) + Na(+)(in) = a 1-acyl-sn-glycero-3-phosphoethanolamine(out) + Na(+)(out)</text>
        <dbReference type="Rhea" id="RHEA:43868"/>
        <dbReference type="ChEBI" id="CHEBI:29101"/>
        <dbReference type="ChEBI" id="CHEBI:64381"/>
    </reaction>
</comment>
<comment type="subunit">
    <text evidence="4">Interacts with ERVFRD-1/syncytin-2.</text>
</comment>
<comment type="interaction">
    <interactant intactId="EBI-9641334">
        <id>Q8NA29-2</id>
    </interactant>
    <interactant intactId="EBI-10315004">
        <id>Q9NWH2</id>
        <label>TMEM242</label>
    </interactant>
    <organismsDiffer>false</organismsDiffer>
    <experiments>3</experiments>
</comment>
<comment type="subcellular location">
    <subcellularLocation>
        <location evidence="9 10">Cell membrane</location>
        <topology evidence="2">Multi-pass membrane protein</topology>
    </subcellularLocation>
    <subcellularLocation>
        <location evidence="1">Endoplasmic reticulum membrane</location>
        <topology evidence="2">Multi-pass membrane protein</topology>
    </subcellularLocation>
    <text evidence="5">Cytoplasmic punctae that may represent vesicles shuttling between the endoplasmic reticulum and the plasma membrane (PubMed:21677192).</text>
</comment>
<comment type="alternative products">
    <event type="alternative splicing"/>
    <isoform>
        <id>Q8NA29-1</id>
        <name>1</name>
        <sequence type="displayed"/>
    </isoform>
    <isoform>
        <id>Q8NA29-2</id>
        <name>2</name>
        <sequence type="described" ref="VSP_022539"/>
    </isoform>
    <isoform>
        <id>Q8NA29-3</id>
        <name>3</name>
        <sequence type="described" ref="VSP_022540"/>
    </isoform>
</comment>
<comment type="tissue specificity">
    <text evidence="4">In placenta, associated with trophoblast cells.</text>
</comment>
<comment type="disease" evidence="8 9 10 11">
    <disease id="DI-04491">
        <name>Neurodevelopmental disorder with progressive microcephaly, spasticity, and brain imaging abnormalities</name>
        <acronym>NEDMISBA</acronym>
        <description>An autosomal recessive disorder characterized by impaired intellectual development with poor speech, progressive microcephaly, and appendicular spasticity. Brain imaging usually shows abnormalities, including enlarged ventricles, white matter defects, and atrophy or hypoplasia of brain tissue. Some patients have a more severe phenotype with seizures, lack of developmental milestones, and early death.</description>
        <dbReference type="MIM" id="616486"/>
    </disease>
    <text>The disease is caused by variants affecting the gene represented in this entry.</text>
</comment>
<comment type="similarity">
    <text evidence="22">Belongs to the major facilitator superfamily.</text>
</comment>
<reference key="1">
    <citation type="journal article" date="2003" name="Genome Res.">
        <title>The secreted protein discovery initiative (SPDI), a large-scale effort to identify novel human secreted and transmembrane proteins: a bioinformatics assessment.</title>
        <authorList>
            <person name="Clark H.F."/>
            <person name="Gurney A.L."/>
            <person name="Abaya E."/>
            <person name="Baker K."/>
            <person name="Baldwin D.T."/>
            <person name="Brush J."/>
            <person name="Chen J."/>
            <person name="Chow B."/>
            <person name="Chui C."/>
            <person name="Crowley C."/>
            <person name="Currell B."/>
            <person name="Deuel B."/>
            <person name="Dowd P."/>
            <person name="Eaton D."/>
            <person name="Foster J.S."/>
            <person name="Grimaldi C."/>
            <person name="Gu Q."/>
            <person name="Hass P.E."/>
            <person name="Heldens S."/>
            <person name="Huang A."/>
            <person name="Kim H.S."/>
            <person name="Klimowski L."/>
            <person name="Jin Y."/>
            <person name="Johnson S."/>
            <person name="Lee J."/>
            <person name="Lewis L."/>
            <person name="Liao D."/>
            <person name="Mark M.R."/>
            <person name="Robbie E."/>
            <person name="Sanchez C."/>
            <person name="Schoenfeld J."/>
            <person name="Seshagiri S."/>
            <person name="Simmons L."/>
            <person name="Singh J."/>
            <person name="Smith V."/>
            <person name="Stinson J."/>
            <person name="Vagts A."/>
            <person name="Vandlen R.L."/>
            <person name="Watanabe C."/>
            <person name="Wieand D."/>
            <person name="Woods K."/>
            <person name="Xie M.-H."/>
            <person name="Yansura D.G."/>
            <person name="Yi S."/>
            <person name="Yu G."/>
            <person name="Yuan J."/>
            <person name="Zhang M."/>
            <person name="Zhang Z."/>
            <person name="Goddard A.D."/>
            <person name="Wood W.I."/>
            <person name="Godowski P.J."/>
            <person name="Gray A.M."/>
        </authorList>
    </citation>
    <scope>NUCLEOTIDE SEQUENCE [LARGE SCALE MRNA] (ISOFORM 3)</scope>
</reference>
<reference key="2">
    <citation type="journal article" date="2004" name="Nat. Genet.">
        <title>Complete sequencing and characterization of 21,243 full-length human cDNAs.</title>
        <authorList>
            <person name="Ota T."/>
            <person name="Suzuki Y."/>
            <person name="Nishikawa T."/>
            <person name="Otsuki T."/>
            <person name="Sugiyama T."/>
            <person name="Irie R."/>
            <person name="Wakamatsu A."/>
            <person name="Hayashi K."/>
            <person name="Sato H."/>
            <person name="Nagai K."/>
            <person name="Kimura K."/>
            <person name="Makita H."/>
            <person name="Sekine M."/>
            <person name="Obayashi M."/>
            <person name="Nishi T."/>
            <person name="Shibahara T."/>
            <person name="Tanaka T."/>
            <person name="Ishii S."/>
            <person name="Yamamoto J."/>
            <person name="Saito K."/>
            <person name="Kawai Y."/>
            <person name="Isono Y."/>
            <person name="Nakamura Y."/>
            <person name="Nagahari K."/>
            <person name="Murakami K."/>
            <person name="Yasuda T."/>
            <person name="Iwayanagi T."/>
            <person name="Wagatsuma M."/>
            <person name="Shiratori A."/>
            <person name="Sudo H."/>
            <person name="Hosoiri T."/>
            <person name="Kaku Y."/>
            <person name="Kodaira H."/>
            <person name="Kondo H."/>
            <person name="Sugawara M."/>
            <person name="Takahashi M."/>
            <person name="Kanda K."/>
            <person name="Yokoi T."/>
            <person name="Furuya T."/>
            <person name="Kikkawa E."/>
            <person name="Omura Y."/>
            <person name="Abe K."/>
            <person name="Kamihara K."/>
            <person name="Katsuta N."/>
            <person name="Sato K."/>
            <person name="Tanikawa M."/>
            <person name="Yamazaki M."/>
            <person name="Ninomiya K."/>
            <person name="Ishibashi T."/>
            <person name="Yamashita H."/>
            <person name="Murakawa K."/>
            <person name="Fujimori K."/>
            <person name="Tanai H."/>
            <person name="Kimata M."/>
            <person name="Watanabe M."/>
            <person name="Hiraoka S."/>
            <person name="Chiba Y."/>
            <person name="Ishida S."/>
            <person name="Ono Y."/>
            <person name="Takiguchi S."/>
            <person name="Watanabe S."/>
            <person name="Yosida M."/>
            <person name="Hotuta T."/>
            <person name="Kusano J."/>
            <person name="Kanehori K."/>
            <person name="Takahashi-Fujii A."/>
            <person name="Hara H."/>
            <person name="Tanase T.-O."/>
            <person name="Nomura Y."/>
            <person name="Togiya S."/>
            <person name="Komai F."/>
            <person name="Hara R."/>
            <person name="Takeuchi K."/>
            <person name="Arita M."/>
            <person name="Imose N."/>
            <person name="Musashino K."/>
            <person name="Yuuki H."/>
            <person name="Oshima A."/>
            <person name="Sasaki N."/>
            <person name="Aotsuka S."/>
            <person name="Yoshikawa Y."/>
            <person name="Matsunawa H."/>
            <person name="Ichihara T."/>
            <person name="Shiohata N."/>
            <person name="Sano S."/>
            <person name="Moriya S."/>
            <person name="Momiyama H."/>
            <person name="Satoh N."/>
            <person name="Takami S."/>
            <person name="Terashima Y."/>
            <person name="Suzuki O."/>
            <person name="Nakagawa S."/>
            <person name="Senoh A."/>
            <person name="Mizoguchi H."/>
            <person name="Goto Y."/>
            <person name="Shimizu F."/>
            <person name="Wakebe H."/>
            <person name="Hishigaki H."/>
            <person name="Watanabe T."/>
            <person name="Sugiyama A."/>
            <person name="Takemoto M."/>
            <person name="Kawakami B."/>
            <person name="Yamazaki M."/>
            <person name="Watanabe K."/>
            <person name="Kumagai A."/>
            <person name="Itakura S."/>
            <person name="Fukuzumi Y."/>
            <person name="Fujimori Y."/>
            <person name="Komiyama M."/>
            <person name="Tashiro H."/>
            <person name="Tanigami A."/>
            <person name="Fujiwara T."/>
            <person name="Ono T."/>
            <person name="Yamada K."/>
            <person name="Fujii Y."/>
            <person name="Ozaki K."/>
            <person name="Hirao M."/>
            <person name="Ohmori Y."/>
            <person name="Kawabata A."/>
            <person name="Hikiji T."/>
            <person name="Kobatake N."/>
            <person name="Inagaki H."/>
            <person name="Ikema Y."/>
            <person name="Okamoto S."/>
            <person name="Okitani R."/>
            <person name="Kawakami T."/>
            <person name="Noguchi S."/>
            <person name="Itoh T."/>
            <person name="Shigeta K."/>
            <person name="Senba T."/>
            <person name="Matsumura K."/>
            <person name="Nakajima Y."/>
            <person name="Mizuno T."/>
            <person name="Morinaga M."/>
            <person name="Sasaki M."/>
            <person name="Togashi T."/>
            <person name="Oyama M."/>
            <person name="Hata H."/>
            <person name="Watanabe M."/>
            <person name="Komatsu T."/>
            <person name="Mizushima-Sugano J."/>
            <person name="Satoh T."/>
            <person name="Shirai Y."/>
            <person name="Takahashi Y."/>
            <person name="Nakagawa K."/>
            <person name="Okumura K."/>
            <person name="Nagase T."/>
            <person name="Nomura N."/>
            <person name="Kikuchi H."/>
            <person name="Masuho Y."/>
            <person name="Yamashita R."/>
            <person name="Nakai K."/>
            <person name="Yada T."/>
            <person name="Nakamura Y."/>
            <person name="Ohara O."/>
            <person name="Isogai T."/>
            <person name="Sugano S."/>
        </authorList>
    </citation>
    <scope>NUCLEOTIDE SEQUENCE [LARGE SCALE MRNA] (ISOFORMS 1 AND 2)</scope>
    <source>
        <tissue>Placenta</tissue>
        <tissue>Testis</tissue>
    </source>
</reference>
<reference key="3">
    <citation type="journal article" date="2004" name="Oncogene">
        <title>Expression profiling and differential screening between hepatoblastomas and the corresponding normal livers: identification of high expression of the PLK1 oncogene as a poor-prognostic indicator of hepatoblastomas.</title>
        <authorList>
            <person name="Yamada S."/>
            <person name="Ohira M."/>
            <person name="Horie H."/>
            <person name="Ando K."/>
            <person name="Takayasu H."/>
            <person name="Suzuki Y."/>
            <person name="Sugano S."/>
            <person name="Hirata T."/>
            <person name="Goto T."/>
            <person name="Matsunaga T."/>
            <person name="Hiyama E."/>
            <person name="Hayashi Y."/>
            <person name="Ando H."/>
            <person name="Suita S."/>
            <person name="Kaneko M."/>
            <person name="Sasaki F."/>
            <person name="Hashizume K."/>
            <person name="Ohnuma N."/>
            <person name="Nakagawara A."/>
        </authorList>
    </citation>
    <scope>NUCLEOTIDE SEQUENCE [LARGE SCALE MRNA] (ISOFORM 2)</scope>
    <source>
        <tissue>Hepatoblastoma</tissue>
    </source>
</reference>
<reference key="4">
    <citation type="journal article" date="2004" name="Proc. Natl. Acad. Sci. U.S.A.">
        <title>Large-scale cDNA transfection screening for genes related to cancer development and progression.</title>
        <authorList>
            <person name="Wan D."/>
            <person name="Gong Y."/>
            <person name="Qin W."/>
            <person name="Zhang P."/>
            <person name="Li J."/>
            <person name="Wei L."/>
            <person name="Zhou X."/>
            <person name="Li H."/>
            <person name="Qiu X."/>
            <person name="Zhong F."/>
            <person name="He L."/>
            <person name="Yu J."/>
            <person name="Yao G."/>
            <person name="Jiang H."/>
            <person name="Qian L."/>
            <person name="Yu Y."/>
            <person name="Shu H."/>
            <person name="Chen X."/>
            <person name="Xu H."/>
            <person name="Guo M."/>
            <person name="Pan Z."/>
            <person name="Chen Y."/>
            <person name="Ge C."/>
            <person name="Yang S."/>
            <person name="Gu J."/>
        </authorList>
    </citation>
    <scope>NUCLEOTIDE SEQUENCE [LARGE SCALE MRNA] (ISOFORM 2)</scope>
</reference>
<reference key="5">
    <citation type="journal article" date="2005" name="DNA Res.">
        <title>Signal sequence and keyword trap in silico for selection of full-length human cDNAs encoding secretion or membrane proteins from oligo-capped cDNA libraries.</title>
        <authorList>
            <person name="Otsuki T."/>
            <person name="Ota T."/>
            <person name="Nishikawa T."/>
            <person name="Hayashi K."/>
            <person name="Suzuki Y."/>
            <person name="Yamamoto J."/>
            <person name="Wakamatsu A."/>
            <person name="Kimura K."/>
            <person name="Sakamoto K."/>
            <person name="Hatano N."/>
            <person name="Kawai Y."/>
            <person name="Ishii S."/>
            <person name="Saito K."/>
            <person name="Kojima S."/>
            <person name="Sugiyama T."/>
            <person name="Ono T."/>
            <person name="Okano K."/>
            <person name="Yoshikawa Y."/>
            <person name="Aotsuka S."/>
            <person name="Sasaki N."/>
            <person name="Hattori A."/>
            <person name="Okumura K."/>
            <person name="Nagai K."/>
            <person name="Sugano S."/>
            <person name="Isogai T."/>
        </authorList>
    </citation>
    <scope>NUCLEOTIDE SEQUENCE [LARGE SCALE MRNA] (ISOFORM 2)</scope>
</reference>
<reference key="6">
    <citation type="journal article" date="2006" name="Nature">
        <title>The DNA sequence and biological annotation of human chromosome 1.</title>
        <authorList>
            <person name="Gregory S.G."/>
            <person name="Barlow K.F."/>
            <person name="McLay K.E."/>
            <person name="Kaul R."/>
            <person name="Swarbreck D."/>
            <person name="Dunham A."/>
            <person name="Scott C.E."/>
            <person name="Howe K.L."/>
            <person name="Woodfine K."/>
            <person name="Spencer C.C.A."/>
            <person name="Jones M.C."/>
            <person name="Gillson C."/>
            <person name="Searle S."/>
            <person name="Zhou Y."/>
            <person name="Kokocinski F."/>
            <person name="McDonald L."/>
            <person name="Evans R."/>
            <person name="Phillips K."/>
            <person name="Atkinson A."/>
            <person name="Cooper R."/>
            <person name="Jones C."/>
            <person name="Hall R.E."/>
            <person name="Andrews T.D."/>
            <person name="Lloyd C."/>
            <person name="Ainscough R."/>
            <person name="Almeida J.P."/>
            <person name="Ambrose K.D."/>
            <person name="Anderson F."/>
            <person name="Andrew R.W."/>
            <person name="Ashwell R.I.S."/>
            <person name="Aubin K."/>
            <person name="Babbage A.K."/>
            <person name="Bagguley C.L."/>
            <person name="Bailey J."/>
            <person name="Beasley H."/>
            <person name="Bethel G."/>
            <person name="Bird C.P."/>
            <person name="Bray-Allen S."/>
            <person name="Brown J.Y."/>
            <person name="Brown A.J."/>
            <person name="Buckley D."/>
            <person name="Burton J."/>
            <person name="Bye J."/>
            <person name="Carder C."/>
            <person name="Chapman J.C."/>
            <person name="Clark S.Y."/>
            <person name="Clarke G."/>
            <person name="Clee C."/>
            <person name="Cobley V."/>
            <person name="Collier R.E."/>
            <person name="Corby N."/>
            <person name="Coville G.J."/>
            <person name="Davies J."/>
            <person name="Deadman R."/>
            <person name="Dunn M."/>
            <person name="Earthrowl M."/>
            <person name="Ellington A.G."/>
            <person name="Errington H."/>
            <person name="Frankish A."/>
            <person name="Frankland J."/>
            <person name="French L."/>
            <person name="Garner P."/>
            <person name="Garnett J."/>
            <person name="Gay L."/>
            <person name="Ghori M.R.J."/>
            <person name="Gibson R."/>
            <person name="Gilby L.M."/>
            <person name="Gillett W."/>
            <person name="Glithero R.J."/>
            <person name="Grafham D.V."/>
            <person name="Griffiths C."/>
            <person name="Griffiths-Jones S."/>
            <person name="Grocock R."/>
            <person name="Hammond S."/>
            <person name="Harrison E.S.I."/>
            <person name="Hart E."/>
            <person name="Haugen E."/>
            <person name="Heath P.D."/>
            <person name="Holmes S."/>
            <person name="Holt K."/>
            <person name="Howden P.J."/>
            <person name="Hunt A.R."/>
            <person name="Hunt S.E."/>
            <person name="Hunter G."/>
            <person name="Isherwood J."/>
            <person name="James R."/>
            <person name="Johnson C."/>
            <person name="Johnson D."/>
            <person name="Joy A."/>
            <person name="Kay M."/>
            <person name="Kershaw J.K."/>
            <person name="Kibukawa M."/>
            <person name="Kimberley A.M."/>
            <person name="King A."/>
            <person name="Knights A.J."/>
            <person name="Lad H."/>
            <person name="Laird G."/>
            <person name="Lawlor S."/>
            <person name="Leongamornlert D.A."/>
            <person name="Lloyd D.M."/>
            <person name="Loveland J."/>
            <person name="Lovell J."/>
            <person name="Lush M.J."/>
            <person name="Lyne R."/>
            <person name="Martin S."/>
            <person name="Mashreghi-Mohammadi M."/>
            <person name="Matthews L."/>
            <person name="Matthews N.S.W."/>
            <person name="McLaren S."/>
            <person name="Milne S."/>
            <person name="Mistry S."/>
            <person name="Moore M.J.F."/>
            <person name="Nickerson T."/>
            <person name="O'Dell C.N."/>
            <person name="Oliver K."/>
            <person name="Palmeiri A."/>
            <person name="Palmer S.A."/>
            <person name="Parker A."/>
            <person name="Patel D."/>
            <person name="Pearce A.V."/>
            <person name="Peck A.I."/>
            <person name="Pelan S."/>
            <person name="Phelps K."/>
            <person name="Phillimore B.J."/>
            <person name="Plumb R."/>
            <person name="Rajan J."/>
            <person name="Raymond C."/>
            <person name="Rouse G."/>
            <person name="Saenphimmachak C."/>
            <person name="Sehra H.K."/>
            <person name="Sheridan E."/>
            <person name="Shownkeen R."/>
            <person name="Sims S."/>
            <person name="Skuce C.D."/>
            <person name="Smith M."/>
            <person name="Steward C."/>
            <person name="Subramanian S."/>
            <person name="Sycamore N."/>
            <person name="Tracey A."/>
            <person name="Tromans A."/>
            <person name="Van Helmond Z."/>
            <person name="Wall M."/>
            <person name="Wallis J.M."/>
            <person name="White S."/>
            <person name="Whitehead S.L."/>
            <person name="Wilkinson J.E."/>
            <person name="Willey D.L."/>
            <person name="Williams H."/>
            <person name="Wilming L."/>
            <person name="Wray P.W."/>
            <person name="Wu Z."/>
            <person name="Coulson A."/>
            <person name="Vaudin M."/>
            <person name="Sulston J.E."/>
            <person name="Durbin R.M."/>
            <person name="Hubbard T."/>
            <person name="Wooster R."/>
            <person name="Dunham I."/>
            <person name="Carter N.P."/>
            <person name="McVean G."/>
            <person name="Ross M.T."/>
            <person name="Harrow J."/>
            <person name="Olson M.V."/>
            <person name="Beck S."/>
            <person name="Rogers J."/>
            <person name="Bentley D.R."/>
        </authorList>
    </citation>
    <scope>NUCLEOTIDE SEQUENCE [LARGE SCALE GENOMIC DNA]</scope>
</reference>
<reference key="7">
    <citation type="submission" date="2005-09" db="EMBL/GenBank/DDBJ databases">
        <authorList>
            <person name="Mural R.J."/>
            <person name="Istrail S."/>
            <person name="Sutton G.G."/>
            <person name="Florea L."/>
            <person name="Halpern A.L."/>
            <person name="Mobarry C.M."/>
            <person name="Lippert R."/>
            <person name="Walenz B."/>
            <person name="Shatkay H."/>
            <person name="Dew I."/>
            <person name="Miller J.R."/>
            <person name="Flanigan M.J."/>
            <person name="Edwards N.J."/>
            <person name="Bolanos R."/>
            <person name="Fasulo D."/>
            <person name="Halldorsson B.V."/>
            <person name="Hannenhalli S."/>
            <person name="Turner R."/>
            <person name="Yooseph S."/>
            <person name="Lu F."/>
            <person name="Nusskern D.R."/>
            <person name="Shue B.C."/>
            <person name="Zheng X.H."/>
            <person name="Zhong F."/>
            <person name="Delcher A.L."/>
            <person name="Huson D.H."/>
            <person name="Kravitz S.A."/>
            <person name="Mouchard L."/>
            <person name="Reinert K."/>
            <person name="Remington K.A."/>
            <person name="Clark A.G."/>
            <person name="Waterman M.S."/>
            <person name="Eichler E.E."/>
            <person name="Adams M.D."/>
            <person name="Hunkapiller M.W."/>
            <person name="Myers E.W."/>
            <person name="Venter J.C."/>
        </authorList>
    </citation>
    <scope>NUCLEOTIDE SEQUENCE [LARGE SCALE GENOMIC DNA]</scope>
</reference>
<reference key="8">
    <citation type="journal article" date="2004" name="Genome Res.">
        <title>The status, quality, and expansion of the NIH full-length cDNA project: the Mammalian Gene Collection (MGC).</title>
        <authorList>
            <consortium name="The MGC Project Team"/>
        </authorList>
    </citation>
    <scope>NUCLEOTIDE SEQUENCE [LARGE SCALE MRNA] (ISOFORM 2)</scope>
    <source>
        <tissue>Eye</tissue>
        <tissue>Muscle</tissue>
        <tissue>Testis</tissue>
    </source>
</reference>
<reference key="9">
    <citation type="journal article" date="2008" name="Biochem. J.">
        <title>Mfsd2a encodes a novel major facilitator superfamily domain-containing protein highly induced in brown adipose tissue during fasting and adaptive thermogenesis.</title>
        <authorList>
            <person name="Angers M."/>
            <person name="Uldry M."/>
            <person name="Kong D."/>
            <person name="Gimble J.M."/>
            <person name="Jetten A.M."/>
        </authorList>
    </citation>
    <scope>IDENTIFICATION</scope>
</reference>
<reference key="10">
    <citation type="journal article" date="2008" name="Proc. Natl. Acad. Sci. U.S.A.">
        <title>A placenta-specific receptor for the fusogenic, endogenous retrovirus-derived, human syncytin-2.</title>
        <authorList>
            <person name="Esnault C."/>
            <person name="Priet S."/>
            <person name="Ribet D."/>
            <person name="Vernochet C."/>
            <person name="Bruls T."/>
            <person name="Lavialle C."/>
            <person name="Weissenbach J."/>
            <person name="Heidmann T."/>
        </authorList>
    </citation>
    <scope>FUNCTION</scope>
    <scope>SUBCELLULAR LOCATION</scope>
    <scope>TOPOLOGY</scope>
    <scope>TISSUE SPECIFICITY</scope>
    <scope>INTERACTION WITH ERVFRD-1</scope>
</reference>
<reference key="11">
    <citation type="journal article" date="2011" name="Proc. Natl. Acad. Sci. U.S.A.">
        <title>A haploid genetic screen identifies the major facilitator domain containing 2A (MFSD2A) transporter as a key mediator in the response to tunicamycin.</title>
        <authorList>
            <person name="Reiling J.H."/>
            <person name="Clish C.B."/>
            <person name="Carette J.E."/>
            <person name="Varadarajan M."/>
            <person name="Brummelkamp T.R."/>
            <person name="Sabatini D.M."/>
        </authorList>
    </citation>
    <scope>FUNCTION</scope>
    <scope>SUBCELLULAR LOCATION</scope>
    <scope>GLYCOSYLATION AT ASN-230 AND ASN-240</scope>
    <scope>MUTAGENESIS OF ARG-103; ASP-106; ASP-110; ASN-230; ASN-240 AND LYS-449</scope>
</reference>
<reference key="12">
    <citation type="journal article" date="2013" name="Placenta">
        <title>MFSD2a, the Syncytin-2 receptor, is important for trophoblast fusion.</title>
        <authorList>
            <person name="Toufaily C."/>
            <person name="Vargas A."/>
            <person name="Lemire M."/>
            <person name="Lafond J."/>
            <person name="Rassart E."/>
            <person name="Barbeau B."/>
        </authorList>
    </citation>
    <scope>FUNCTION</scope>
</reference>
<reference key="13">
    <citation type="journal article" date="2014" name="Nature">
        <title>Mfsd2a is critical for the formation and function of the blood-brain barrier.</title>
        <authorList>
            <person name="Ben-Zvi A."/>
            <person name="Lacoste B."/>
            <person name="Kur E."/>
            <person name="Andreone B.J."/>
            <person name="Mayshar Y."/>
            <person name="Yan H."/>
            <person name="Gu C."/>
        </authorList>
    </citation>
    <scope>FUNCTION</scope>
    <scope>CATALYTIC ACTIVITY</scope>
</reference>
<reference key="14">
    <citation type="journal article" date="2021" name="Nature">
        <title>Structural basis of omega-3 fatty acid transport across the blood-brain barrier.</title>
        <authorList>
            <person name="Cater R.J."/>
            <person name="Chua G.L."/>
            <person name="Erramilli S.K."/>
            <person name="Keener J.E."/>
            <person name="Choy B.C."/>
            <person name="Tokarz P."/>
            <person name="Chin C.F."/>
            <person name="Quek D.Q.Y."/>
            <person name="Kloss B."/>
            <person name="Pepe J.G."/>
            <person name="Parisi G."/>
            <person name="Wong B.H."/>
            <person name="Clarke O.B."/>
            <person name="Marty M.T."/>
            <person name="Kossiakoff A.A."/>
            <person name="Khelashvili G."/>
            <person name="Silver D.L."/>
            <person name="Mancia F."/>
        </authorList>
    </citation>
    <scope>FUNCTION</scope>
    <scope>DISULFIDE BOND</scope>
    <scope>MUTAGENESIS OF GLN-57; PHE-65; PHE-66; ASP-73; ARG-103; ASP-110; MET-200; CYS-225; GLU-325; PHE-328; TYR-334; ARG-339; PHE-342; LEU-346; ILE-349; MET-350; ILE-357; GLN-361; ALA-404; PHE-412; TRP-416; LYS-449; TYR-468 AND CYS-473</scope>
</reference>
<reference key="15">
    <citation type="journal article" date="2015" name="Nat. Genet.">
        <title>Inactivating mutations in MFSD2A, required for omega-3 fatty acid transport in brain, cause a lethal microcephaly syndrome.</title>
        <authorList>
            <person name="Guemez-Gamboa A."/>
            <person name="Nguyen L.N."/>
            <person name="Yang H."/>
            <person name="Zaki M.S."/>
            <person name="Kara M."/>
            <person name="Ben-Omran T."/>
            <person name="Akizu N."/>
            <person name="Rosti R.O."/>
            <person name="Rosti B."/>
            <person name="Scott E."/>
            <person name="Schroth J."/>
            <person name="Copeland B."/>
            <person name="Vaux K.K."/>
            <person name="Cazenave-Gassiot A."/>
            <person name="Quek D.Q."/>
            <person name="Wong B.H."/>
            <person name="Tan B.C."/>
            <person name="Wenk M.R."/>
            <person name="Gunel M."/>
            <person name="Gabriel S."/>
            <person name="Chi N.C."/>
            <person name="Silver D.L."/>
            <person name="Gleeson J.G."/>
        </authorList>
    </citation>
    <scope>INVOLVEMENT IN NEDMISBA</scope>
    <scope>VARIANTS NEDMISBA MET-172 AND LEU-179</scope>
    <scope>CHARACTERIZATION OF VARIANTS NEDMISBA MET-172 AND LEU-179</scope>
    <scope>FUNCTION</scope>
    <scope>SUBCELLULAR LOCATION</scope>
</reference>
<reference key="16">
    <citation type="journal article" date="2015" name="Nat. Genet.">
        <title>A partially inactivating mutation in the sodium-dependent lysophosphatidylcholine transporter MFSD2A causes a non-lethal microcephaly syndrome.</title>
        <authorList>
            <person name="Alakbarzade V."/>
            <person name="Hameed A."/>
            <person name="Quek D.Q."/>
            <person name="Chioza B.A."/>
            <person name="Baple E.L."/>
            <person name="Cazenave-Gassiot A."/>
            <person name="Nguyen L.N."/>
            <person name="Wenk M.R."/>
            <person name="Ahmad A.Q."/>
            <person name="Sreekantan-Nair A."/>
            <person name="Weedon M.N."/>
            <person name="Rich P."/>
            <person name="Patton M.A."/>
            <person name="Warner T.T."/>
            <person name="Silver D.L."/>
            <person name="Crosby A.H."/>
        </authorList>
    </citation>
    <scope>INVOLVEMENT IN NEDMISBA</scope>
    <scope>VARIANT NEDMISBA LEU-352</scope>
    <scope>CHARACTERIZATION OF VARIANT NEDMISBA LEU-352</scope>
</reference>
<reference key="17">
    <citation type="journal article" date="2020" name="Eur. J. Hum. Genet.">
        <title>Biallelic MFSD2A variants associated with congenital microcephaly, developmental delay, and recognizable neuroimaging features.</title>
        <authorList>
            <person name="Scala M."/>
            <person name="Chua G.L."/>
            <person name="Chin C.F."/>
            <person name="Alsaif H.S."/>
            <person name="Borovikov A."/>
            <person name="Riazuddin S."/>
            <person name="Riazuddin S."/>
            <person name="Chiara Manzini M."/>
            <person name="Severino M."/>
            <person name="Kuk A."/>
            <person name="Fan H."/>
            <person name="Jamshidi Y."/>
            <person name="Toosi M.B."/>
            <person name="Doosti M."/>
            <person name="Karimiani E.G."/>
            <person name="Salpietro V."/>
            <person name="Dadali E."/>
            <person name="Baydakova G."/>
            <person name="Konovalov F."/>
            <person name="Lozier E."/>
            <person name="O'Connor E."/>
            <person name="Sabr Y."/>
            <person name="Alfaifi A."/>
            <person name="Ashrafzadeh F."/>
            <person name="Striano P."/>
            <person name="Zara F."/>
            <person name="Alkuraya F.S."/>
            <person name="Houlden H."/>
            <person name="Maroofian R."/>
            <person name="Silver D.L."/>
        </authorList>
    </citation>
    <scope>VARIANTS NEDMISBA MET-172; MET-211; PHE-263; HIS-339 AND LEU-506</scope>
    <scope>CHARACTERIZATION OF VARIANTS MET-211; PHE-263; HIS-339 AND LEU-506</scope>
    <scope>MUTAGENESIS OF PRO-177</scope>
    <scope>FUNCTION</scope>
    <scope>SUBCELLULAR LOCATION</scope>
</reference>
<reference key="18">
    <citation type="journal article" date="2020" name="Eur. J. Med. Genet.">
        <title>Novel neuroclinical findings of autosomal recessive primary microcephaly 15 in a consanguineous Iranian family.</title>
        <authorList>
            <person name="Razmara E."/>
            <person name="Azimi H."/>
            <person name="Tavasoli A.R."/>
            <person name="Fallahi E."/>
            <person name="Sheida S.V."/>
            <person name="Eidi M."/>
            <person name="Bitaraf A."/>
            <person name="Farjami Z."/>
            <person name="Daneshmand M.A."/>
            <person name="Garshasbi M."/>
        </authorList>
    </citation>
    <scope>VARIANT NEDMISBA VAL-81 DEL</scope>
</reference>
<name>NLS1_HUMAN</name>
<proteinExistence type="evidence at protein level"/>